<feature type="chain" id="PRO_0000214329" description="UPF0301 protein Rv0038">
    <location>
        <begin position="1"/>
        <end position="202"/>
    </location>
</feature>
<organism>
    <name type="scientific">Mycobacterium tuberculosis (strain ATCC 25618 / H37Rv)</name>
    <dbReference type="NCBI Taxonomy" id="83332"/>
    <lineage>
        <taxon>Bacteria</taxon>
        <taxon>Bacillati</taxon>
        <taxon>Actinomycetota</taxon>
        <taxon>Actinomycetes</taxon>
        <taxon>Mycobacteriales</taxon>
        <taxon>Mycobacteriaceae</taxon>
        <taxon>Mycobacterium</taxon>
        <taxon>Mycobacterium tuberculosis complex</taxon>
    </lineage>
</organism>
<sequence length="202" mass="21808">MVAPHEDPEDHVAPAAQRVRAGTLLLANTDLLEPTFRRSVIYIVEHNDGGTLGVVLNRPSETAVYNVLPQWAKLAAKPKTMFIGGPVKRDAALCLAVLRVGADPEGVPGLRHVAGRLVMVDLDADPEVLAAAVEGVRIYAGYSGWTIGQLEGEIERDDWIVLSALPSDVLVGPRADLWGQVLRRQPLPLSLLATHPIDLSRN</sequence>
<gene>
    <name type="ordered locus">Rv0038</name>
    <name type="ORF">MTCY10H4.38</name>
</gene>
<reference key="1">
    <citation type="journal article" date="1998" name="Nature">
        <title>Deciphering the biology of Mycobacterium tuberculosis from the complete genome sequence.</title>
        <authorList>
            <person name="Cole S.T."/>
            <person name="Brosch R."/>
            <person name="Parkhill J."/>
            <person name="Garnier T."/>
            <person name="Churcher C.M."/>
            <person name="Harris D.E."/>
            <person name="Gordon S.V."/>
            <person name="Eiglmeier K."/>
            <person name="Gas S."/>
            <person name="Barry C.E. III"/>
            <person name="Tekaia F."/>
            <person name="Badcock K."/>
            <person name="Basham D."/>
            <person name="Brown D."/>
            <person name="Chillingworth T."/>
            <person name="Connor R."/>
            <person name="Davies R.M."/>
            <person name="Devlin K."/>
            <person name="Feltwell T."/>
            <person name="Gentles S."/>
            <person name="Hamlin N."/>
            <person name="Holroyd S."/>
            <person name="Hornsby T."/>
            <person name="Jagels K."/>
            <person name="Krogh A."/>
            <person name="McLean J."/>
            <person name="Moule S."/>
            <person name="Murphy L.D."/>
            <person name="Oliver S."/>
            <person name="Osborne J."/>
            <person name="Quail M.A."/>
            <person name="Rajandream M.A."/>
            <person name="Rogers J."/>
            <person name="Rutter S."/>
            <person name="Seeger K."/>
            <person name="Skelton S."/>
            <person name="Squares S."/>
            <person name="Squares R."/>
            <person name="Sulston J.E."/>
            <person name="Taylor K."/>
            <person name="Whitehead S."/>
            <person name="Barrell B.G."/>
        </authorList>
    </citation>
    <scope>NUCLEOTIDE SEQUENCE [LARGE SCALE GENOMIC DNA]</scope>
    <source>
        <strain>ATCC 25618 / H37Rv</strain>
    </source>
</reference>
<reference key="2">
    <citation type="journal article" date="2011" name="Mol. Cell. Proteomics">
        <title>Proteogenomic analysis of Mycobacterium tuberculosis by high resolution mass spectrometry.</title>
        <authorList>
            <person name="Kelkar D.S."/>
            <person name="Kumar D."/>
            <person name="Kumar P."/>
            <person name="Balakrishnan L."/>
            <person name="Muthusamy B."/>
            <person name="Yadav A.K."/>
            <person name="Shrivastava P."/>
            <person name="Marimuthu A."/>
            <person name="Anand S."/>
            <person name="Sundaram H."/>
            <person name="Kingsbury R."/>
            <person name="Harsha H.C."/>
            <person name="Nair B."/>
            <person name="Prasad T.S."/>
            <person name="Chauhan D.S."/>
            <person name="Katoch K."/>
            <person name="Katoch V.M."/>
            <person name="Kumar P."/>
            <person name="Chaerkady R."/>
            <person name="Ramachandran S."/>
            <person name="Dash D."/>
            <person name="Pandey A."/>
        </authorList>
    </citation>
    <scope>IDENTIFICATION BY MASS SPECTROMETRY [LARGE SCALE ANALYSIS]</scope>
    <source>
        <strain>ATCC 25618 / H37Rv</strain>
    </source>
</reference>
<accession>P9WFK5</accession>
<accession>L0T2D6</accession>
<accession>P67757</accession>
<accession>P71608</accession>
<comment type="similarity">
    <text evidence="1">Belongs to the UPF0301 (AlgH) family.</text>
</comment>
<evidence type="ECO:0000305" key="1"/>
<keyword id="KW-1185">Reference proteome</keyword>
<protein>
    <recommendedName>
        <fullName>UPF0301 protein Rv0038</fullName>
    </recommendedName>
</protein>
<name>Y038_MYCTU</name>
<proteinExistence type="evidence at protein level"/>
<dbReference type="EMBL" id="AL123456">
    <property type="protein sequence ID" value="CCP42760.1"/>
    <property type="molecule type" value="Genomic_DNA"/>
</dbReference>
<dbReference type="PIR" id="D70702">
    <property type="entry name" value="D70702"/>
</dbReference>
<dbReference type="RefSeq" id="NP_214552.1">
    <property type="nucleotide sequence ID" value="NC_000962.3"/>
</dbReference>
<dbReference type="RefSeq" id="WP_003400460.1">
    <property type="nucleotide sequence ID" value="NZ_NVQJ01000005.1"/>
</dbReference>
<dbReference type="SMR" id="P9WFK5"/>
<dbReference type="FunCoup" id="P9WFK5">
    <property type="interactions" value="33"/>
</dbReference>
<dbReference type="STRING" id="83332.Rv0038"/>
<dbReference type="PaxDb" id="83332-Rv0038"/>
<dbReference type="DNASU" id="887045"/>
<dbReference type="GeneID" id="887045"/>
<dbReference type="KEGG" id="mtu:Rv0038"/>
<dbReference type="KEGG" id="mtv:RVBD_0038"/>
<dbReference type="PATRIC" id="fig|83332.111.peg.43"/>
<dbReference type="TubercuList" id="Rv0038"/>
<dbReference type="eggNOG" id="COG1678">
    <property type="taxonomic scope" value="Bacteria"/>
</dbReference>
<dbReference type="InParanoid" id="P9WFK5"/>
<dbReference type="OrthoDB" id="9807486at2"/>
<dbReference type="PhylomeDB" id="P9WFK5"/>
<dbReference type="Proteomes" id="UP000001584">
    <property type="component" value="Chromosome"/>
</dbReference>
<dbReference type="GO" id="GO:0005829">
    <property type="term" value="C:cytosol"/>
    <property type="evidence" value="ECO:0000318"/>
    <property type="project" value="GO_Central"/>
</dbReference>
<dbReference type="GO" id="GO:0005886">
    <property type="term" value="C:plasma membrane"/>
    <property type="evidence" value="ECO:0007005"/>
    <property type="project" value="MTBBASE"/>
</dbReference>
<dbReference type="FunFam" id="3.40.1740.10:FF:000002">
    <property type="entry name" value="UPF0301 protein A5636_14805"/>
    <property type="match status" value="1"/>
</dbReference>
<dbReference type="Gene3D" id="3.40.1740.10">
    <property type="entry name" value="VC0467-like"/>
    <property type="match status" value="1"/>
</dbReference>
<dbReference type="HAMAP" id="MF_00758">
    <property type="entry name" value="UPF0301"/>
    <property type="match status" value="1"/>
</dbReference>
<dbReference type="InterPro" id="IPR003774">
    <property type="entry name" value="AlgH-like"/>
</dbReference>
<dbReference type="NCBIfam" id="NF001269">
    <property type="entry name" value="PRK00228.2-1"/>
    <property type="match status" value="1"/>
</dbReference>
<dbReference type="NCBIfam" id="NF001272">
    <property type="entry name" value="PRK00228.2-4"/>
    <property type="match status" value="1"/>
</dbReference>
<dbReference type="PANTHER" id="PTHR30327">
    <property type="entry name" value="UNCHARACTERIZED PROTEIN YQGE"/>
    <property type="match status" value="1"/>
</dbReference>
<dbReference type="PANTHER" id="PTHR30327:SF1">
    <property type="entry name" value="UPF0301 PROTEIN YQGE"/>
    <property type="match status" value="1"/>
</dbReference>
<dbReference type="Pfam" id="PF02622">
    <property type="entry name" value="DUF179"/>
    <property type="match status" value="1"/>
</dbReference>
<dbReference type="SUPFAM" id="SSF143456">
    <property type="entry name" value="VC0467-like"/>
    <property type="match status" value="1"/>
</dbReference>